<evidence type="ECO:0000255" key="1">
    <source>
        <dbReference type="HAMAP-Rule" id="MF_00250"/>
    </source>
</evidence>
<proteinExistence type="inferred from homology"/>
<protein>
    <recommendedName>
        <fullName evidence="1">DNA-directed RNA polymerase subunit Rpo10</fullName>
        <ecNumber evidence="1">2.7.7.6</ecNumber>
    </recommendedName>
    <alternativeName>
        <fullName evidence="1">DNA-directed RNA polymerase subunit N</fullName>
    </alternativeName>
</protein>
<sequence length="66" mass="7606">MMIPIRCFTCGSLIADKWQPFITRVNAGENPGKVLDDLGVKRYCCRRMLLSHIDIISEVIHYTRPI</sequence>
<reference key="1">
    <citation type="journal article" date="2009" name="Proc. Natl. Acad. Sci. U.S.A.">
        <title>Biogeography of the Sulfolobus islandicus pan-genome.</title>
        <authorList>
            <person name="Reno M.L."/>
            <person name="Held N.L."/>
            <person name="Fields C.J."/>
            <person name="Burke P.V."/>
            <person name="Whitaker R.J."/>
        </authorList>
    </citation>
    <scope>NUCLEOTIDE SEQUENCE [LARGE SCALE GENOMIC DNA]</scope>
    <source>
        <strain>M.14.25 / Kamchatka #1</strain>
    </source>
</reference>
<dbReference type="EC" id="2.7.7.6" evidence="1"/>
<dbReference type="EMBL" id="CP001400">
    <property type="protein sequence ID" value="ACP38793.1"/>
    <property type="molecule type" value="Genomic_DNA"/>
</dbReference>
<dbReference type="RefSeq" id="WP_012712019.1">
    <property type="nucleotide sequence ID" value="NC_012588.1"/>
</dbReference>
<dbReference type="SMR" id="C3MZ09"/>
<dbReference type="KEGG" id="sia:M1425_2052"/>
<dbReference type="HOGENOM" id="CLU_143122_1_1_2"/>
<dbReference type="Proteomes" id="UP000001350">
    <property type="component" value="Chromosome"/>
</dbReference>
<dbReference type="GO" id="GO:0005737">
    <property type="term" value="C:cytoplasm"/>
    <property type="evidence" value="ECO:0007669"/>
    <property type="project" value="UniProtKB-SubCell"/>
</dbReference>
<dbReference type="GO" id="GO:0000428">
    <property type="term" value="C:DNA-directed RNA polymerase complex"/>
    <property type="evidence" value="ECO:0007669"/>
    <property type="project" value="UniProtKB-KW"/>
</dbReference>
<dbReference type="GO" id="GO:0003677">
    <property type="term" value="F:DNA binding"/>
    <property type="evidence" value="ECO:0007669"/>
    <property type="project" value="InterPro"/>
</dbReference>
<dbReference type="GO" id="GO:0003899">
    <property type="term" value="F:DNA-directed RNA polymerase activity"/>
    <property type="evidence" value="ECO:0007669"/>
    <property type="project" value="UniProtKB-UniRule"/>
</dbReference>
<dbReference type="GO" id="GO:0008270">
    <property type="term" value="F:zinc ion binding"/>
    <property type="evidence" value="ECO:0007669"/>
    <property type="project" value="UniProtKB-UniRule"/>
</dbReference>
<dbReference type="GO" id="GO:0006351">
    <property type="term" value="P:DNA-templated transcription"/>
    <property type="evidence" value="ECO:0007669"/>
    <property type="project" value="UniProtKB-UniRule"/>
</dbReference>
<dbReference type="FunFam" id="1.10.10.60:FF:000335">
    <property type="entry name" value="DNA-directed RNA polymerase subunit N, putative"/>
    <property type="match status" value="1"/>
</dbReference>
<dbReference type="Gene3D" id="1.10.10.60">
    <property type="entry name" value="Homeodomain-like"/>
    <property type="match status" value="1"/>
</dbReference>
<dbReference type="HAMAP" id="MF_00250">
    <property type="entry name" value="RNApol_arch_Rpo10"/>
    <property type="match status" value="1"/>
</dbReference>
<dbReference type="InterPro" id="IPR023580">
    <property type="entry name" value="RNA_pol_su_RPB10"/>
</dbReference>
<dbReference type="InterPro" id="IPR020789">
    <property type="entry name" value="RNA_pol_suN_Zn-BS"/>
</dbReference>
<dbReference type="InterPro" id="IPR000268">
    <property type="entry name" value="RPABC5/Rpb10"/>
</dbReference>
<dbReference type="NCBIfam" id="NF003089">
    <property type="entry name" value="PRK04016.1"/>
    <property type="match status" value="1"/>
</dbReference>
<dbReference type="PANTHER" id="PTHR23431:SF3">
    <property type="entry name" value="DNA-DIRECTED RNA POLYMERASES I, II, AND III SUBUNIT RPABC5"/>
    <property type="match status" value="1"/>
</dbReference>
<dbReference type="PANTHER" id="PTHR23431">
    <property type="entry name" value="DNA-DIRECTED RNA POLYMERASES I, II, AND III SUBUNIT RPABC5 FAMILY MEMBER"/>
    <property type="match status" value="1"/>
</dbReference>
<dbReference type="Pfam" id="PF01194">
    <property type="entry name" value="RNA_pol_N"/>
    <property type="match status" value="1"/>
</dbReference>
<dbReference type="PIRSF" id="PIRSF005653">
    <property type="entry name" value="RNA_pol_N/8_sub"/>
    <property type="match status" value="1"/>
</dbReference>
<dbReference type="SUPFAM" id="SSF46924">
    <property type="entry name" value="RNA polymerase subunit RPB10"/>
    <property type="match status" value="1"/>
</dbReference>
<dbReference type="PROSITE" id="PS01112">
    <property type="entry name" value="RNA_POL_N_8KD"/>
    <property type="match status" value="1"/>
</dbReference>
<comment type="function">
    <text evidence="1">DNA-dependent RNA polymerase (RNAP) catalyzes the transcription of DNA into RNA using the four ribonucleoside triphosphates as substrates.</text>
</comment>
<comment type="catalytic activity">
    <reaction evidence="1">
        <text>RNA(n) + a ribonucleoside 5'-triphosphate = RNA(n+1) + diphosphate</text>
        <dbReference type="Rhea" id="RHEA:21248"/>
        <dbReference type="Rhea" id="RHEA-COMP:14527"/>
        <dbReference type="Rhea" id="RHEA-COMP:17342"/>
        <dbReference type="ChEBI" id="CHEBI:33019"/>
        <dbReference type="ChEBI" id="CHEBI:61557"/>
        <dbReference type="ChEBI" id="CHEBI:140395"/>
        <dbReference type="EC" id="2.7.7.6"/>
    </reaction>
</comment>
<comment type="cofactor">
    <cofactor evidence="1">
        <name>Zn(2+)</name>
        <dbReference type="ChEBI" id="CHEBI:29105"/>
    </cofactor>
    <text evidence="1">Binds 1 zinc ion.</text>
</comment>
<comment type="subunit">
    <text evidence="1">Part of the RNA polymerase complex.</text>
</comment>
<comment type="subcellular location">
    <subcellularLocation>
        <location evidence="1">Cytoplasm</location>
    </subcellularLocation>
</comment>
<comment type="similarity">
    <text evidence="1">Belongs to the archaeal Rpo10/eukaryotic RPB10 RNA polymerase subunit family.</text>
</comment>
<name>RPO10_SACI4</name>
<feature type="chain" id="PRO_1000204537" description="DNA-directed RNA polymerase subunit Rpo10">
    <location>
        <begin position="1"/>
        <end position="66"/>
    </location>
</feature>
<feature type="binding site" evidence="1">
    <location>
        <position position="7"/>
    </location>
    <ligand>
        <name>Zn(2+)</name>
        <dbReference type="ChEBI" id="CHEBI:29105"/>
    </ligand>
</feature>
<feature type="binding site" evidence="1">
    <location>
        <position position="10"/>
    </location>
    <ligand>
        <name>Zn(2+)</name>
        <dbReference type="ChEBI" id="CHEBI:29105"/>
    </ligand>
</feature>
<feature type="binding site" evidence="1">
    <location>
        <position position="44"/>
    </location>
    <ligand>
        <name>Zn(2+)</name>
        <dbReference type="ChEBI" id="CHEBI:29105"/>
    </ligand>
</feature>
<feature type="binding site" evidence="1">
    <location>
        <position position="45"/>
    </location>
    <ligand>
        <name>Zn(2+)</name>
        <dbReference type="ChEBI" id="CHEBI:29105"/>
    </ligand>
</feature>
<organism>
    <name type="scientific">Saccharolobus islandicus (strain M.14.25 / Kamchatka #1)</name>
    <name type="common">Sulfolobus islandicus</name>
    <dbReference type="NCBI Taxonomy" id="427317"/>
    <lineage>
        <taxon>Archaea</taxon>
        <taxon>Thermoproteota</taxon>
        <taxon>Thermoprotei</taxon>
        <taxon>Sulfolobales</taxon>
        <taxon>Sulfolobaceae</taxon>
        <taxon>Saccharolobus</taxon>
    </lineage>
</organism>
<accession>C3MZ09</accession>
<keyword id="KW-0963">Cytoplasm</keyword>
<keyword id="KW-0240">DNA-directed RNA polymerase</keyword>
<keyword id="KW-0479">Metal-binding</keyword>
<keyword id="KW-0548">Nucleotidyltransferase</keyword>
<keyword id="KW-0804">Transcription</keyword>
<keyword id="KW-0808">Transferase</keyword>
<keyword id="KW-0862">Zinc</keyword>
<gene>
    <name evidence="1" type="primary">rpo10</name>
    <name evidence="1" type="synonym">rpoN</name>
    <name type="ordered locus">M1425_2052</name>
</gene>